<evidence type="ECO:0000255" key="1">
    <source>
        <dbReference type="HAMAP-Rule" id="MF_00230"/>
    </source>
</evidence>
<name>COBT_RHIR8</name>
<gene>
    <name evidence="1" type="primary">cobT</name>
    <name type="ordered locus">Arad_2733</name>
</gene>
<accession>B9JG15</accession>
<reference key="1">
    <citation type="journal article" date="2009" name="J. Bacteriol.">
        <title>Genome sequences of three Agrobacterium biovars help elucidate the evolution of multichromosome genomes in bacteria.</title>
        <authorList>
            <person name="Slater S.C."/>
            <person name="Goldman B.S."/>
            <person name="Goodner B."/>
            <person name="Setubal J.C."/>
            <person name="Farrand S.K."/>
            <person name="Nester E.W."/>
            <person name="Burr T.J."/>
            <person name="Banta L."/>
            <person name="Dickerman A.W."/>
            <person name="Paulsen I."/>
            <person name="Otten L."/>
            <person name="Suen G."/>
            <person name="Welch R."/>
            <person name="Almeida N.F."/>
            <person name="Arnold F."/>
            <person name="Burton O.T."/>
            <person name="Du Z."/>
            <person name="Ewing A."/>
            <person name="Godsy E."/>
            <person name="Heisel S."/>
            <person name="Houmiel K.L."/>
            <person name="Jhaveri J."/>
            <person name="Lu J."/>
            <person name="Miller N.M."/>
            <person name="Norton S."/>
            <person name="Chen Q."/>
            <person name="Phoolcharoen W."/>
            <person name="Ohlin V."/>
            <person name="Ondrusek D."/>
            <person name="Pride N."/>
            <person name="Stricklin S.L."/>
            <person name="Sun J."/>
            <person name="Wheeler C."/>
            <person name="Wilson L."/>
            <person name="Zhu H."/>
            <person name="Wood D.W."/>
        </authorList>
    </citation>
    <scope>NUCLEOTIDE SEQUENCE [LARGE SCALE GENOMIC DNA]</scope>
    <source>
        <strain>K84 / ATCC BAA-868</strain>
    </source>
</reference>
<proteinExistence type="inferred from homology"/>
<organism>
    <name type="scientific">Rhizobium rhizogenes (strain K84 / ATCC BAA-868)</name>
    <name type="common">Agrobacterium radiobacter</name>
    <dbReference type="NCBI Taxonomy" id="311403"/>
    <lineage>
        <taxon>Bacteria</taxon>
        <taxon>Pseudomonadati</taxon>
        <taxon>Pseudomonadota</taxon>
        <taxon>Alphaproteobacteria</taxon>
        <taxon>Hyphomicrobiales</taxon>
        <taxon>Rhizobiaceae</taxon>
        <taxon>Rhizobium/Agrobacterium group</taxon>
        <taxon>Rhizobium</taxon>
    </lineage>
</organism>
<keyword id="KW-0169">Cobalamin biosynthesis</keyword>
<keyword id="KW-0328">Glycosyltransferase</keyword>
<keyword id="KW-0808">Transferase</keyword>
<feature type="chain" id="PRO_1000125098" description="Nicotinate-nucleotide--dimethylbenzimidazole phosphoribosyltransferase">
    <location>
        <begin position="1"/>
        <end position="338"/>
    </location>
</feature>
<feature type="active site" description="Proton acceptor" evidence="1">
    <location>
        <position position="305"/>
    </location>
</feature>
<comment type="function">
    <text evidence="1">Catalyzes the synthesis of alpha-ribazole-5'-phosphate from nicotinate mononucleotide (NAMN) and 5,6-dimethylbenzimidazole (DMB).</text>
</comment>
<comment type="catalytic activity">
    <reaction evidence="1">
        <text>5,6-dimethylbenzimidazole + nicotinate beta-D-ribonucleotide = alpha-ribazole 5'-phosphate + nicotinate + H(+)</text>
        <dbReference type="Rhea" id="RHEA:11196"/>
        <dbReference type="ChEBI" id="CHEBI:15378"/>
        <dbReference type="ChEBI" id="CHEBI:15890"/>
        <dbReference type="ChEBI" id="CHEBI:32544"/>
        <dbReference type="ChEBI" id="CHEBI:57502"/>
        <dbReference type="ChEBI" id="CHEBI:57918"/>
        <dbReference type="EC" id="2.4.2.21"/>
    </reaction>
</comment>
<comment type="pathway">
    <text evidence="1">Nucleoside biosynthesis; alpha-ribazole biosynthesis; alpha-ribazole from 5,6-dimethylbenzimidazole: step 1/2.</text>
</comment>
<comment type="similarity">
    <text evidence="1">Belongs to the CobT family.</text>
</comment>
<sequence>MSVTGLPFDDFRTLLRDLPGPDPRALVAARERDAQLTKPPGALGRLEEIAFWLAAWTGRAPAVTRPLVAIFAGNHGVTKQGITPFPPSVTQQMVENFAAGGAAINQICVTYDLGLKVFDLALDYPTGDITEEPALSERDCAATMAFGMEAIAGGTDLLCIGEMGIGNTTIAAAIHYALYGGTAAEWVGPGTGSEGEMLKRKIAAVEKAAALHREHLSDPLEVLRRLGGREIAAMAGAILAARMERIPVIIDGYVATAAASILKAANPSALDHCLIGHVSAEPGHLKAIDKLGKTPLLALGMRLGEGTGAALAAGIVKAAAACHSGMATFESAGVTNKH</sequence>
<dbReference type="EC" id="2.4.2.21" evidence="1"/>
<dbReference type="EMBL" id="CP000628">
    <property type="protein sequence ID" value="ACM26855.1"/>
    <property type="molecule type" value="Genomic_DNA"/>
</dbReference>
<dbReference type="RefSeq" id="WP_012651665.1">
    <property type="nucleotide sequence ID" value="NC_011985.1"/>
</dbReference>
<dbReference type="SMR" id="B9JG15"/>
<dbReference type="STRING" id="311403.Arad_2733"/>
<dbReference type="GeneID" id="86848717"/>
<dbReference type="KEGG" id="ara:Arad_2733"/>
<dbReference type="eggNOG" id="COG2038">
    <property type="taxonomic scope" value="Bacteria"/>
</dbReference>
<dbReference type="HOGENOM" id="CLU_002982_0_1_5"/>
<dbReference type="UniPathway" id="UPA00061">
    <property type="reaction ID" value="UER00516"/>
</dbReference>
<dbReference type="Proteomes" id="UP000001600">
    <property type="component" value="Chromosome 1"/>
</dbReference>
<dbReference type="GO" id="GO:0008939">
    <property type="term" value="F:nicotinate-nucleotide-dimethylbenzimidazole phosphoribosyltransferase activity"/>
    <property type="evidence" value="ECO:0007669"/>
    <property type="project" value="UniProtKB-UniRule"/>
</dbReference>
<dbReference type="GO" id="GO:0009236">
    <property type="term" value="P:cobalamin biosynthetic process"/>
    <property type="evidence" value="ECO:0007669"/>
    <property type="project" value="UniProtKB-KW"/>
</dbReference>
<dbReference type="CDD" id="cd02439">
    <property type="entry name" value="DMB-PRT_CobT"/>
    <property type="match status" value="1"/>
</dbReference>
<dbReference type="Gene3D" id="1.10.1610.10">
    <property type="match status" value="1"/>
</dbReference>
<dbReference type="Gene3D" id="3.40.50.10210">
    <property type="match status" value="1"/>
</dbReference>
<dbReference type="HAMAP" id="MF_00230">
    <property type="entry name" value="CobT"/>
    <property type="match status" value="1"/>
</dbReference>
<dbReference type="InterPro" id="IPR003200">
    <property type="entry name" value="Nict_dMeBzImd_PRibTrfase"/>
</dbReference>
<dbReference type="InterPro" id="IPR017846">
    <property type="entry name" value="Nict_dMeBzImd_PRibTrfase_bact"/>
</dbReference>
<dbReference type="InterPro" id="IPR023195">
    <property type="entry name" value="Nict_dMeBzImd_PRibTrfase_N"/>
</dbReference>
<dbReference type="InterPro" id="IPR036087">
    <property type="entry name" value="Nict_dMeBzImd_PRibTrfase_sf"/>
</dbReference>
<dbReference type="NCBIfam" id="TIGR03160">
    <property type="entry name" value="cobT_DBIPRT"/>
    <property type="match status" value="1"/>
</dbReference>
<dbReference type="NCBIfam" id="NF000996">
    <property type="entry name" value="PRK00105.1"/>
    <property type="match status" value="1"/>
</dbReference>
<dbReference type="PANTHER" id="PTHR43463">
    <property type="entry name" value="NICOTINATE-NUCLEOTIDE--DIMETHYLBENZIMIDAZOLE PHOSPHORIBOSYLTRANSFERASE"/>
    <property type="match status" value="1"/>
</dbReference>
<dbReference type="PANTHER" id="PTHR43463:SF1">
    <property type="entry name" value="NICOTINATE-NUCLEOTIDE--DIMETHYLBENZIMIDAZOLE PHOSPHORIBOSYLTRANSFERASE"/>
    <property type="match status" value="1"/>
</dbReference>
<dbReference type="Pfam" id="PF02277">
    <property type="entry name" value="DBI_PRT"/>
    <property type="match status" value="1"/>
</dbReference>
<dbReference type="SUPFAM" id="SSF52733">
    <property type="entry name" value="Nicotinate mononucleotide:5,6-dimethylbenzimidazole phosphoribosyltransferase (CobT)"/>
    <property type="match status" value="1"/>
</dbReference>
<protein>
    <recommendedName>
        <fullName evidence="1">Nicotinate-nucleotide--dimethylbenzimidazole phosphoribosyltransferase</fullName>
        <shortName evidence="1">NN:DBI PRT</shortName>
        <ecNumber evidence="1">2.4.2.21</ecNumber>
    </recommendedName>
    <alternativeName>
        <fullName evidence="1">N(1)-alpha-phosphoribosyltransferase</fullName>
    </alternativeName>
</protein>